<protein>
    <recommendedName>
        <fullName>Catalase B</fullName>
        <ecNumber>1.11.1.6</ecNumber>
    </recommendedName>
</protein>
<sequence length="495" mass="57127">MSNNKKLTSLFGAPVSDRENSMTAGPRGPLVMQDWYFLEQMAHFDREVIPERRMHAKGSGAFGTFTVTNDITQYTSASIFSEVGKQTEMFARFSTVAGERGAADAERDIRGFALKFYTDEGNWDLVGNNTPVFFFRDPKLFASLNHAVKRDPRTNMRSAQNNWDFWTSLPEALHQVTILMSDRGIPKGYRNMHGFGSHTYSMYNDKGERVWVKFHHRTQQGIENLQPDEAAKIIADDRESSQRDLFEAIENKDYPKWKTYIQVMTEEQARNHKDNPFDLTKVWYKGDYPLIEVGEWELNRNPDNYFQDVEQAAFAPTNIVPGIDFSPDKMLQGRLFSYGDAQRYRLGVNHWQIPVNQPKGVGVENICPFSRDGQMRILDNNQGGGTHYYPNSDGSFEDQPEFKKPGLKVEGEAYEYDFRQDDDNYFEQPGRLFRLQSKEQQERIFENTANEMQGTTLEVQHRHIRHCYKADSEYGKGVARALGVDINDVDLEIKD</sequence>
<dbReference type="EC" id="1.11.1.6"/>
<dbReference type="EMBL" id="AY702101">
    <property type="protein sequence ID" value="AAU07935.2"/>
    <property type="molecule type" value="Genomic_DNA"/>
</dbReference>
<dbReference type="RefSeq" id="WP_029377399.1">
    <property type="nucleotide sequence ID" value="NZ_UHEI01000002.1"/>
</dbReference>
<dbReference type="SMR" id="Q66V81"/>
<dbReference type="STRING" id="1288.AWC37_04160"/>
<dbReference type="KEGG" id="sxy:BE24_03960"/>
<dbReference type="PATRIC" id="fig|1288.89.peg.1248"/>
<dbReference type="eggNOG" id="COG0753">
    <property type="taxonomic scope" value="Bacteria"/>
</dbReference>
<dbReference type="GO" id="GO:0005737">
    <property type="term" value="C:cytoplasm"/>
    <property type="evidence" value="ECO:0007669"/>
    <property type="project" value="TreeGrafter"/>
</dbReference>
<dbReference type="GO" id="GO:0004096">
    <property type="term" value="F:catalase activity"/>
    <property type="evidence" value="ECO:0007669"/>
    <property type="project" value="UniProtKB-EC"/>
</dbReference>
<dbReference type="GO" id="GO:0020037">
    <property type="term" value="F:heme binding"/>
    <property type="evidence" value="ECO:0007669"/>
    <property type="project" value="InterPro"/>
</dbReference>
<dbReference type="GO" id="GO:0046872">
    <property type="term" value="F:metal ion binding"/>
    <property type="evidence" value="ECO:0007669"/>
    <property type="project" value="UniProtKB-KW"/>
</dbReference>
<dbReference type="GO" id="GO:0042744">
    <property type="term" value="P:hydrogen peroxide catabolic process"/>
    <property type="evidence" value="ECO:0007669"/>
    <property type="project" value="UniProtKB-KW"/>
</dbReference>
<dbReference type="GO" id="GO:0042542">
    <property type="term" value="P:response to hydrogen peroxide"/>
    <property type="evidence" value="ECO:0007669"/>
    <property type="project" value="TreeGrafter"/>
</dbReference>
<dbReference type="CDD" id="cd08156">
    <property type="entry name" value="catalase_clade_3"/>
    <property type="match status" value="1"/>
</dbReference>
<dbReference type="FunFam" id="2.40.180.10:FF:000001">
    <property type="entry name" value="Catalase"/>
    <property type="match status" value="1"/>
</dbReference>
<dbReference type="Gene3D" id="2.40.180.10">
    <property type="entry name" value="Catalase core domain"/>
    <property type="match status" value="1"/>
</dbReference>
<dbReference type="InterPro" id="IPR018028">
    <property type="entry name" value="Catalase"/>
</dbReference>
<dbReference type="InterPro" id="IPR040333">
    <property type="entry name" value="Catalase_3"/>
</dbReference>
<dbReference type="InterPro" id="IPR024708">
    <property type="entry name" value="Catalase_AS"/>
</dbReference>
<dbReference type="InterPro" id="IPR024711">
    <property type="entry name" value="Catalase_clade1/3"/>
</dbReference>
<dbReference type="InterPro" id="IPR011614">
    <property type="entry name" value="Catalase_core"/>
</dbReference>
<dbReference type="InterPro" id="IPR002226">
    <property type="entry name" value="Catalase_haem_BS"/>
</dbReference>
<dbReference type="InterPro" id="IPR010582">
    <property type="entry name" value="Catalase_immune_responsive"/>
</dbReference>
<dbReference type="InterPro" id="IPR020835">
    <property type="entry name" value="Catalase_sf"/>
</dbReference>
<dbReference type="PANTHER" id="PTHR11465">
    <property type="entry name" value="CATALASE"/>
    <property type="match status" value="1"/>
</dbReference>
<dbReference type="PANTHER" id="PTHR11465:SF61">
    <property type="entry name" value="CATALASE"/>
    <property type="match status" value="1"/>
</dbReference>
<dbReference type="Pfam" id="PF00199">
    <property type="entry name" value="Catalase"/>
    <property type="match status" value="1"/>
</dbReference>
<dbReference type="Pfam" id="PF06628">
    <property type="entry name" value="Catalase-rel"/>
    <property type="match status" value="1"/>
</dbReference>
<dbReference type="PIRSF" id="PIRSF038928">
    <property type="entry name" value="Catalase_clade1-3"/>
    <property type="match status" value="1"/>
</dbReference>
<dbReference type="PRINTS" id="PR00067">
    <property type="entry name" value="CATALASE"/>
</dbReference>
<dbReference type="SMART" id="SM01060">
    <property type="entry name" value="Catalase"/>
    <property type="match status" value="1"/>
</dbReference>
<dbReference type="SUPFAM" id="SSF56634">
    <property type="entry name" value="Heme-dependent catalase-like"/>
    <property type="match status" value="1"/>
</dbReference>
<dbReference type="PROSITE" id="PS00437">
    <property type="entry name" value="CATALASE_1"/>
    <property type="match status" value="1"/>
</dbReference>
<dbReference type="PROSITE" id="PS00438">
    <property type="entry name" value="CATALASE_2"/>
    <property type="match status" value="1"/>
</dbReference>
<dbReference type="PROSITE" id="PS51402">
    <property type="entry name" value="CATALASE_3"/>
    <property type="match status" value="1"/>
</dbReference>
<name>CATB_STAXY</name>
<feature type="chain" id="PRO_0000085010" description="Catalase B">
    <location>
        <begin position="1"/>
        <end position="495"/>
    </location>
</feature>
<feature type="region of interest" description="Disordered" evidence="3">
    <location>
        <begin position="1"/>
        <end position="25"/>
    </location>
</feature>
<feature type="active site" evidence="2">
    <location>
        <position position="55"/>
    </location>
</feature>
<feature type="active site" evidence="2">
    <location>
        <position position="128"/>
    </location>
</feature>
<feature type="binding site" description="axial binding residue" evidence="1">
    <location>
        <position position="338"/>
    </location>
    <ligand>
        <name>heme</name>
        <dbReference type="ChEBI" id="CHEBI:30413"/>
    </ligand>
    <ligandPart>
        <name>Fe</name>
        <dbReference type="ChEBI" id="CHEBI:18248"/>
    </ligandPart>
</feature>
<comment type="function">
    <text evidence="1">Decomposes hydrogen peroxide into water and oxygen; serves to protect cells from the toxic effects of hydrogen peroxide.</text>
</comment>
<comment type="catalytic activity">
    <reaction evidence="2">
        <text>2 H2O2 = O2 + 2 H2O</text>
        <dbReference type="Rhea" id="RHEA:20309"/>
        <dbReference type="ChEBI" id="CHEBI:15377"/>
        <dbReference type="ChEBI" id="CHEBI:15379"/>
        <dbReference type="ChEBI" id="CHEBI:16240"/>
        <dbReference type="EC" id="1.11.1.6"/>
    </reaction>
</comment>
<comment type="cofactor">
    <cofactor evidence="1">
        <name>heme</name>
        <dbReference type="ChEBI" id="CHEBI:30413"/>
    </cofactor>
</comment>
<comment type="subunit">
    <text evidence="1">Homodimer.</text>
</comment>
<comment type="similarity">
    <text evidence="4">Belongs to the catalase family.</text>
</comment>
<organism>
    <name type="scientific">Staphylococcus xylosus</name>
    <dbReference type="NCBI Taxonomy" id="1288"/>
    <lineage>
        <taxon>Bacteria</taxon>
        <taxon>Bacillati</taxon>
        <taxon>Bacillota</taxon>
        <taxon>Bacilli</taxon>
        <taxon>Bacillales</taxon>
        <taxon>Staphylococcaceae</taxon>
        <taxon>Staphylococcus</taxon>
    </lineage>
</organism>
<evidence type="ECO:0000250" key="1"/>
<evidence type="ECO:0000255" key="2">
    <source>
        <dbReference type="PROSITE-ProRule" id="PRU10013"/>
    </source>
</evidence>
<evidence type="ECO:0000256" key="3">
    <source>
        <dbReference type="SAM" id="MobiDB-lite"/>
    </source>
</evidence>
<evidence type="ECO:0000305" key="4"/>
<accession>Q66V81</accession>
<reference key="1">
    <citation type="submission" date="2005-06" db="EMBL/GenBank/DDBJ databases">
        <title>Sequence polymorphism of Staphylococcus xylosus katA and sodA genes: detection of some atypical Staphylococcus xylosus strains.</title>
        <authorList>
            <person name="Blaiotta G."/>
            <person name="Fusco V."/>
            <person name="Ercolini D."/>
            <person name="Coppola S."/>
        </authorList>
    </citation>
    <scope>NUCLEOTIDE SEQUENCE [GENOMIC DNA]</scope>
    <source>
        <strain>ATCC 29971 / CIP 81.66 / DSM 20266 / JCM 2418 / LMG 20217 / NCTC 11043 / CCM 2738</strain>
    </source>
</reference>
<keyword id="KW-0349">Heme</keyword>
<keyword id="KW-0376">Hydrogen peroxide</keyword>
<keyword id="KW-0408">Iron</keyword>
<keyword id="KW-0479">Metal-binding</keyword>
<keyword id="KW-0560">Oxidoreductase</keyword>
<keyword id="KW-0575">Peroxidase</keyword>
<proteinExistence type="inferred from homology"/>
<gene>
    <name type="primary">katB</name>
</gene>